<comment type="function">
    <text evidence="1">Modifies, by uridylylation and deuridylylation, the PII regulatory proteins (GlnB and homologs), in response to the nitrogen status of the cell that GlnD senses through the glutamine level. Under low glutamine levels, catalyzes the conversion of the PII proteins and UTP to PII-UMP and PPi, while under higher glutamine levels, GlnD hydrolyzes PII-UMP to PII and UMP (deuridylylation). Thus, controls uridylylation state and activity of the PII proteins, and plays an important role in the regulation of nitrogen fixation and metabolism.</text>
</comment>
<comment type="catalytic activity">
    <reaction evidence="1">
        <text>[protein-PII]-L-tyrosine + UTP = [protein-PII]-uridylyl-L-tyrosine + diphosphate</text>
        <dbReference type="Rhea" id="RHEA:13673"/>
        <dbReference type="Rhea" id="RHEA-COMP:12147"/>
        <dbReference type="Rhea" id="RHEA-COMP:12148"/>
        <dbReference type="ChEBI" id="CHEBI:33019"/>
        <dbReference type="ChEBI" id="CHEBI:46398"/>
        <dbReference type="ChEBI" id="CHEBI:46858"/>
        <dbReference type="ChEBI" id="CHEBI:90602"/>
        <dbReference type="EC" id="2.7.7.59"/>
    </reaction>
</comment>
<comment type="catalytic activity">
    <reaction evidence="1">
        <text>[protein-PII]-uridylyl-L-tyrosine + H2O = [protein-PII]-L-tyrosine + UMP + H(+)</text>
        <dbReference type="Rhea" id="RHEA:48600"/>
        <dbReference type="Rhea" id="RHEA-COMP:12147"/>
        <dbReference type="Rhea" id="RHEA-COMP:12148"/>
        <dbReference type="ChEBI" id="CHEBI:15377"/>
        <dbReference type="ChEBI" id="CHEBI:15378"/>
        <dbReference type="ChEBI" id="CHEBI:46858"/>
        <dbReference type="ChEBI" id="CHEBI:57865"/>
        <dbReference type="ChEBI" id="CHEBI:90602"/>
    </reaction>
</comment>
<comment type="cofactor">
    <cofactor evidence="1">
        <name>Mg(2+)</name>
        <dbReference type="ChEBI" id="CHEBI:18420"/>
    </cofactor>
</comment>
<comment type="activity regulation">
    <text evidence="1">Uridylyltransferase (UTase) activity is inhibited by glutamine, while glutamine activates uridylyl-removing (UR) activity.</text>
</comment>
<comment type="domain">
    <text evidence="1">Has four distinct domains: an N-terminal nucleotidyltransferase (NT) domain responsible for UTase activity, a central HD domain that encodes UR activity, and two C-terminal ACT domains that seem to have a role in glutamine sensing.</text>
</comment>
<comment type="similarity">
    <text evidence="1">Belongs to the GlnD family.</text>
</comment>
<gene>
    <name evidence="1" type="primary">glnD</name>
    <name type="ordered locus">Avin_39010</name>
</gene>
<accession>C1DSU8</accession>
<evidence type="ECO:0000255" key="1">
    <source>
        <dbReference type="HAMAP-Rule" id="MF_00277"/>
    </source>
</evidence>
<evidence type="ECO:0000255" key="2">
    <source>
        <dbReference type="PROSITE-ProRule" id="PRU01175"/>
    </source>
</evidence>
<proteinExistence type="inferred from homology"/>
<name>GLND_AZOVD</name>
<dbReference type="EC" id="2.7.7.59" evidence="1"/>
<dbReference type="EC" id="3.1.4.-" evidence="1"/>
<dbReference type="EMBL" id="CP001157">
    <property type="protein sequence ID" value="ACO80041.1"/>
    <property type="molecule type" value="Genomic_DNA"/>
</dbReference>
<dbReference type="RefSeq" id="WP_012702416.1">
    <property type="nucleotide sequence ID" value="NC_012560.1"/>
</dbReference>
<dbReference type="SMR" id="C1DSU8"/>
<dbReference type="STRING" id="322710.Avin_39010"/>
<dbReference type="EnsemblBacteria" id="ACO80041">
    <property type="protein sequence ID" value="ACO80041"/>
    <property type="gene ID" value="Avin_39010"/>
</dbReference>
<dbReference type="GeneID" id="88186859"/>
<dbReference type="KEGG" id="avn:Avin_39010"/>
<dbReference type="eggNOG" id="COG2844">
    <property type="taxonomic scope" value="Bacteria"/>
</dbReference>
<dbReference type="HOGENOM" id="CLU_012833_0_0_6"/>
<dbReference type="OrthoDB" id="9758038at2"/>
<dbReference type="Proteomes" id="UP000002424">
    <property type="component" value="Chromosome"/>
</dbReference>
<dbReference type="GO" id="GO:0008773">
    <property type="term" value="F:[protein-PII] uridylyltransferase activity"/>
    <property type="evidence" value="ECO:0007669"/>
    <property type="project" value="UniProtKB-UniRule"/>
</dbReference>
<dbReference type="GO" id="GO:0008081">
    <property type="term" value="F:phosphoric diester hydrolase activity"/>
    <property type="evidence" value="ECO:0007669"/>
    <property type="project" value="UniProtKB-UniRule"/>
</dbReference>
<dbReference type="GO" id="GO:0009399">
    <property type="term" value="P:nitrogen fixation"/>
    <property type="evidence" value="ECO:0007669"/>
    <property type="project" value="UniProtKB-UniRule"/>
</dbReference>
<dbReference type="GO" id="GO:0006808">
    <property type="term" value="P:regulation of nitrogen utilization"/>
    <property type="evidence" value="ECO:0007669"/>
    <property type="project" value="UniProtKB-UniRule"/>
</dbReference>
<dbReference type="CDD" id="cd04899">
    <property type="entry name" value="ACT_ACR-UUR-like_2"/>
    <property type="match status" value="1"/>
</dbReference>
<dbReference type="CDD" id="cd04900">
    <property type="entry name" value="ACT_UUR-like_1"/>
    <property type="match status" value="1"/>
</dbReference>
<dbReference type="CDD" id="cd00077">
    <property type="entry name" value="HDc"/>
    <property type="match status" value="1"/>
</dbReference>
<dbReference type="CDD" id="cd05401">
    <property type="entry name" value="NT_GlnE_GlnD_like"/>
    <property type="match status" value="1"/>
</dbReference>
<dbReference type="FunFam" id="1.10.3090.10:FF:000005">
    <property type="entry name" value="Bifunctional uridylyltransferase/uridylyl-removing enzyme"/>
    <property type="match status" value="1"/>
</dbReference>
<dbReference type="Gene3D" id="3.30.460.10">
    <property type="entry name" value="Beta Polymerase, domain 2"/>
    <property type="match status" value="1"/>
</dbReference>
<dbReference type="Gene3D" id="1.10.3090.10">
    <property type="entry name" value="cca-adding enzyme, domain 2"/>
    <property type="match status" value="1"/>
</dbReference>
<dbReference type="HAMAP" id="MF_00277">
    <property type="entry name" value="PII_uridylyl_transf"/>
    <property type="match status" value="1"/>
</dbReference>
<dbReference type="InterPro" id="IPR045865">
    <property type="entry name" value="ACT-like_dom_sf"/>
</dbReference>
<dbReference type="InterPro" id="IPR002912">
    <property type="entry name" value="ACT_dom"/>
</dbReference>
<dbReference type="InterPro" id="IPR003607">
    <property type="entry name" value="HD/PDEase_dom"/>
</dbReference>
<dbReference type="InterPro" id="IPR006674">
    <property type="entry name" value="HD_domain"/>
</dbReference>
<dbReference type="InterPro" id="IPR043519">
    <property type="entry name" value="NT_sf"/>
</dbReference>
<dbReference type="InterPro" id="IPR013546">
    <property type="entry name" value="PII_UdlTrfase/GS_AdlTrfase"/>
</dbReference>
<dbReference type="InterPro" id="IPR002934">
    <property type="entry name" value="Polymerase_NTP_transf_dom"/>
</dbReference>
<dbReference type="InterPro" id="IPR010043">
    <property type="entry name" value="UTase/UR"/>
</dbReference>
<dbReference type="NCBIfam" id="NF001366">
    <property type="entry name" value="PRK00275.1"/>
    <property type="match status" value="1"/>
</dbReference>
<dbReference type="NCBIfam" id="TIGR01693">
    <property type="entry name" value="UTase_glnD"/>
    <property type="match status" value="1"/>
</dbReference>
<dbReference type="PANTHER" id="PTHR47320">
    <property type="entry name" value="BIFUNCTIONAL URIDYLYLTRANSFERASE/URIDYLYL-REMOVING ENZYME"/>
    <property type="match status" value="1"/>
</dbReference>
<dbReference type="PANTHER" id="PTHR47320:SF1">
    <property type="entry name" value="BIFUNCTIONAL URIDYLYLTRANSFERASE_URIDYLYL-REMOVING ENZYME"/>
    <property type="match status" value="1"/>
</dbReference>
<dbReference type="Pfam" id="PF01842">
    <property type="entry name" value="ACT"/>
    <property type="match status" value="1"/>
</dbReference>
<dbReference type="Pfam" id="PF08335">
    <property type="entry name" value="GlnD_UR_UTase"/>
    <property type="match status" value="1"/>
</dbReference>
<dbReference type="Pfam" id="PF01966">
    <property type="entry name" value="HD"/>
    <property type="match status" value="1"/>
</dbReference>
<dbReference type="Pfam" id="PF01909">
    <property type="entry name" value="NTP_transf_2"/>
    <property type="match status" value="1"/>
</dbReference>
<dbReference type="PIRSF" id="PIRSF006288">
    <property type="entry name" value="PII_uridyltransf"/>
    <property type="match status" value="1"/>
</dbReference>
<dbReference type="SMART" id="SM00471">
    <property type="entry name" value="HDc"/>
    <property type="match status" value="1"/>
</dbReference>
<dbReference type="SUPFAM" id="SSF55021">
    <property type="entry name" value="ACT-like"/>
    <property type="match status" value="1"/>
</dbReference>
<dbReference type="SUPFAM" id="SSF109604">
    <property type="entry name" value="HD-domain/PDEase-like"/>
    <property type="match status" value="1"/>
</dbReference>
<dbReference type="SUPFAM" id="SSF81301">
    <property type="entry name" value="Nucleotidyltransferase"/>
    <property type="match status" value="1"/>
</dbReference>
<dbReference type="SUPFAM" id="SSF81593">
    <property type="entry name" value="Nucleotidyltransferase substrate binding subunit/domain"/>
    <property type="match status" value="1"/>
</dbReference>
<dbReference type="PROSITE" id="PS51671">
    <property type="entry name" value="ACT"/>
    <property type="match status" value="2"/>
</dbReference>
<dbReference type="PROSITE" id="PS51831">
    <property type="entry name" value="HD"/>
    <property type="match status" value="1"/>
</dbReference>
<keyword id="KW-0378">Hydrolase</keyword>
<keyword id="KW-0460">Magnesium</keyword>
<keyword id="KW-0511">Multifunctional enzyme</keyword>
<keyword id="KW-0535">Nitrogen fixation</keyword>
<keyword id="KW-0548">Nucleotidyltransferase</keyword>
<keyword id="KW-0677">Repeat</keyword>
<keyword id="KW-0808">Transferase</keyword>
<sequence>MPQVDPDLFDPGQFQAELALKSSPIPAYKKALRCAREVLDARFQEGRDIRRLIEDRAWFVDQILALAWNRFDWSEDADIALIAVGGYGRGELHPYSDIDLLILMDGADHEVFREPIEGFLTLLWDIGLEVGQSVRSLAECAEEAQADLTVITNLMESRTIAGPEHLRQRMQEVTSAQRMWPSRAFFLAKRDEQKTRHARYNDTEYNLEPNVKGSPGGLRDIQTLLWIARRQFGTINLHAMVGQGFLLESEYTLLASSQEFLWKVRYALHMLAGRAEDRLLFDLQRQIAGLLGYEDSDAKLAVERFMQKYYRVVLGIAELTELVFQHFEEVILPGDAAGRVEPLNERFQVRDGYLEVTHAGVFQETPSALLEIFVLLARRPEIRGVRADTIRLLRDHRYLIDDAFRRDPHNTGLFIELFKSRQGIHRNLRRMNRYGILGRYLPEFGHIVGQMQHDLFHIYTVDAHTLNLIKNLRKLFWPELAEKYPLASKLIEKLPKPELIYLAGLYHDIGKGRGGDHSELGAADALAFCQRHDLPAMDTQLIVWLVRNHLLMSTTAQRKDLSDPQVIFDFAQKVRDQTYLDYLYVLTVADINATNPTLWNSWRASLLRQLYTETKHALRRGLEQPVGREEQIRQTQKAALDILVRSGTDPDDAEHLWTQLGDDYFLRHTSSDIAWHTEAILQHPSSGGPLVLIKETTQREFEGATQIFIYAPDQHDFFAVTVAAMDQLNLSIHDARVITSTSQFTLDTYIVLDADGGSIGNNPARIQEIRQGLVEALRNPADYPTIIQRRVPRQLKHFAFAPQVTIQNDALRPVTILEIIAPDRPGLLARIGKIFLDFDLSLQNAKIATLGERVEDVFFVTDAHNQPLSDPELCARLQLAIAEQLADGDSYIQPSRISI</sequence>
<reference key="1">
    <citation type="journal article" date="2009" name="J. Bacteriol.">
        <title>Genome sequence of Azotobacter vinelandii, an obligate aerobe specialized to support diverse anaerobic metabolic processes.</title>
        <authorList>
            <person name="Setubal J.C."/>
            <person name="Dos Santos P."/>
            <person name="Goldman B.S."/>
            <person name="Ertesvaag H."/>
            <person name="Espin G."/>
            <person name="Rubio L.M."/>
            <person name="Valla S."/>
            <person name="Almeida N.F."/>
            <person name="Balasubramanian D."/>
            <person name="Cromes L."/>
            <person name="Curatti L."/>
            <person name="Du Z."/>
            <person name="Godsy E."/>
            <person name="Goodner B."/>
            <person name="Hellner-Burris K."/>
            <person name="Hernandez J.A."/>
            <person name="Houmiel K."/>
            <person name="Imperial J."/>
            <person name="Kennedy C."/>
            <person name="Larson T.J."/>
            <person name="Latreille P."/>
            <person name="Ligon L.S."/>
            <person name="Lu J."/>
            <person name="Maerk M."/>
            <person name="Miller N.M."/>
            <person name="Norton S."/>
            <person name="O'Carroll I.P."/>
            <person name="Paulsen I."/>
            <person name="Raulfs E.C."/>
            <person name="Roemer R."/>
            <person name="Rosser J."/>
            <person name="Segura D."/>
            <person name="Slater S."/>
            <person name="Stricklin S.L."/>
            <person name="Studholme D.J."/>
            <person name="Sun J."/>
            <person name="Viana C.J."/>
            <person name="Wallin E."/>
            <person name="Wang B."/>
            <person name="Wheeler C."/>
            <person name="Zhu H."/>
            <person name="Dean D.R."/>
            <person name="Dixon R."/>
            <person name="Wood D."/>
        </authorList>
    </citation>
    <scope>NUCLEOTIDE SEQUENCE [LARGE SCALE GENOMIC DNA]</scope>
    <source>
        <strain>DJ / ATCC BAA-1303</strain>
    </source>
</reference>
<feature type="chain" id="PRO_1000204797" description="Bifunctional uridylyltransferase/uridylyl-removing enzyme">
    <location>
        <begin position="1"/>
        <end position="899"/>
    </location>
</feature>
<feature type="domain" description="HD" evidence="2">
    <location>
        <begin position="461"/>
        <end position="583"/>
    </location>
</feature>
<feature type="domain" description="ACT 1" evidence="1">
    <location>
        <begin position="706"/>
        <end position="789"/>
    </location>
</feature>
<feature type="domain" description="ACT 2" evidence="1">
    <location>
        <begin position="816"/>
        <end position="899"/>
    </location>
</feature>
<feature type="region of interest" description="Uridylyltransferase">
    <location>
        <begin position="1"/>
        <end position="342"/>
    </location>
</feature>
<feature type="region of interest" description="Uridylyl-removing">
    <location>
        <begin position="343"/>
        <end position="705"/>
    </location>
</feature>
<organism>
    <name type="scientific">Azotobacter vinelandii (strain DJ / ATCC BAA-1303)</name>
    <dbReference type="NCBI Taxonomy" id="322710"/>
    <lineage>
        <taxon>Bacteria</taxon>
        <taxon>Pseudomonadati</taxon>
        <taxon>Pseudomonadota</taxon>
        <taxon>Gammaproteobacteria</taxon>
        <taxon>Pseudomonadales</taxon>
        <taxon>Pseudomonadaceae</taxon>
        <taxon>Azotobacter</taxon>
    </lineage>
</organism>
<protein>
    <recommendedName>
        <fullName evidence="1">Bifunctional uridylyltransferase/uridylyl-removing enzyme</fullName>
        <shortName evidence="1">UTase/UR</shortName>
    </recommendedName>
    <alternativeName>
        <fullName evidence="1">Bifunctional [protein-PII] modification enzyme</fullName>
    </alternativeName>
    <alternativeName>
        <fullName evidence="1">Bifunctional nitrogen sensor protein</fullName>
    </alternativeName>
    <domain>
        <recommendedName>
            <fullName evidence="1">[Protein-PII] uridylyltransferase</fullName>
            <shortName evidence="1">PII uridylyltransferase</shortName>
            <shortName evidence="1">UTase</shortName>
            <ecNumber evidence="1">2.7.7.59</ecNumber>
        </recommendedName>
    </domain>
    <domain>
        <recommendedName>
            <fullName evidence="1">[Protein-PII]-UMP uridylyl-removing enzyme</fullName>
            <shortName evidence="1">UR</shortName>
            <ecNumber evidence="1">3.1.4.-</ecNumber>
        </recommendedName>
    </domain>
</protein>